<dbReference type="EC" id="4.6.1.18" evidence="2"/>
<dbReference type="EMBL" id="AF479634">
    <property type="protein sequence ID" value="AAM14441.1"/>
    <property type="molecule type" value="Genomic_DNA"/>
</dbReference>
<dbReference type="SMR" id="Q8SPY2"/>
<dbReference type="FunCoup" id="Q8SPY2">
    <property type="interactions" value="36"/>
</dbReference>
<dbReference type="STRING" id="9483.ENSCJAP00000017651"/>
<dbReference type="GlyCosmos" id="Q8SPY2">
    <property type="glycosylation" value="3 sites, No reported glycans"/>
</dbReference>
<dbReference type="eggNOG" id="ENOG502TF52">
    <property type="taxonomic scope" value="Eukaryota"/>
</dbReference>
<dbReference type="InParanoid" id="Q8SPY2"/>
<dbReference type="Proteomes" id="UP000008225">
    <property type="component" value="Unplaced"/>
</dbReference>
<dbReference type="GO" id="GO:0005615">
    <property type="term" value="C:extracellular space"/>
    <property type="evidence" value="ECO:0007669"/>
    <property type="project" value="TreeGrafter"/>
</dbReference>
<dbReference type="GO" id="GO:0005764">
    <property type="term" value="C:lysosome"/>
    <property type="evidence" value="ECO:0007669"/>
    <property type="project" value="UniProtKB-SubCell"/>
</dbReference>
<dbReference type="GO" id="GO:0016829">
    <property type="term" value="F:lyase activity"/>
    <property type="evidence" value="ECO:0007669"/>
    <property type="project" value="UniProtKB-KW"/>
</dbReference>
<dbReference type="GO" id="GO:0003676">
    <property type="term" value="F:nucleic acid binding"/>
    <property type="evidence" value="ECO:0007669"/>
    <property type="project" value="InterPro"/>
</dbReference>
<dbReference type="GO" id="GO:0004522">
    <property type="term" value="F:ribonuclease A activity"/>
    <property type="evidence" value="ECO:0007669"/>
    <property type="project" value="UniProtKB-EC"/>
</dbReference>
<dbReference type="GO" id="GO:0006935">
    <property type="term" value="P:chemotaxis"/>
    <property type="evidence" value="ECO:0007669"/>
    <property type="project" value="TreeGrafter"/>
</dbReference>
<dbReference type="GO" id="GO:0051607">
    <property type="term" value="P:defense response to virus"/>
    <property type="evidence" value="ECO:0007669"/>
    <property type="project" value="UniProtKB-ARBA"/>
</dbReference>
<dbReference type="GO" id="GO:0002227">
    <property type="term" value="P:innate immune response in mucosa"/>
    <property type="evidence" value="ECO:0007669"/>
    <property type="project" value="TreeGrafter"/>
</dbReference>
<dbReference type="CDD" id="cd06265">
    <property type="entry name" value="RNase_A_canonical"/>
    <property type="match status" value="1"/>
</dbReference>
<dbReference type="FunFam" id="3.10.130.10:FF:000001">
    <property type="entry name" value="Ribonuclease pancreatic"/>
    <property type="match status" value="1"/>
</dbReference>
<dbReference type="Gene3D" id="3.10.130.10">
    <property type="entry name" value="Ribonuclease A-like domain"/>
    <property type="match status" value="1"/>
</dbReference>
<dbReference type="InterPro" id="IPR001427">
    <property type="entry name" value="RNaseA"/>
</dbReference>
<dbReference type="InterPro" id="IPR036816">
    <property type="entry name" value="RNaseA-like_dom_sf"/>
</dbReference>
<dbReference type="InterPro" id="IPR023411">
    <property type="entry name" value="RNaseA_AS"/>
</dbReference>
<dbReference type="InterPro" id="IPR023412">
    <property type="entry name" value="RNaseA_domain"/>
</dbReference>
<dbReference type="PANTHER" id="PTHR11437:SF62">
    <property type="entry name" value="NON-SECRETORY RIBONUCLEASE"/>
    <property type="match status" value="1"/>
</dbReference>
<dbReference type="PANTHER" id="PTHR11437">
    <property type="entry name" value="RIBONUCLEASE"/>
    <property type="match status" value="1"/>
</dbReference>
<dbReference type="Pfam" id="PF00074">
    <property type="entry name" value="RnaseA"/>
    <property type="match status" value="1"/>
</dbReference>
<dbReference type="PRINTS" id="PR00794">
    <property type="entry name" value="RIBONUCLEASE"/>
</dbReference>
<dbReference type="SMART" id="SM00092">
    <property type="entry name" value="RNAse_Pc"/>
    <property type="match status" value="1"/>
</dbReference>
<dbReference type="SUPFAM" id="SSF54076">
    <property type="entry name" value="RNase A-like"/>
    <property type="match status" value="1"/>
</dbReference>
<dbReference type="PROSITE" id="PS00127">
    <property type="entry name" value="RNASE_PANCREATIC"/>
    <property type="match status" value="1"/>
</dbReference>
<evidence type="ECO:0000250" key="1"/>
<evidence type="ECO:0000250" key="2">
    <source>
        <dbReference type="UniProtKB" id="O18937"/>
    </source>
</evidence>
<evidence type="ECO:0000250" key="3">
    <source>
        <dbReference type="UniProtKB" id="P10153"/>
    </source>
</evidence>
<evidence type="ECO:0000255" key="4"/>
<evidence type="ECO:0000305" key="5"/>
<sequence>MVPKLFTSQICLLPLLGLLSAEGSPHARPQQYSRAQWFSIQHIQTAPLHCTSAMRAINKYQSRCKNKNTFLHTTFADVVNVCGNTNMTCPHNASLNNCHHSGVQVPLTYCNLTGPQTISNCVYSSTQANKFYVVACENRDPRDPPQYPVVPVHLDTII</sequence>
<keyword id="KW-0255">Endonuclease</keyword>
<keyword id="KW-0325">Glycoprotein</keyword>
<keyword id="KW-0378">Hydrolase</keyword>
<keyword id="KW-0456">Lyase</keyword>
<keyword id="KW-0458">Lysosome</keyword>
<keyword id="KW-0944">Nitration</keyword>
<keyword id="KW-0540">Nuclease</keyword>
<keyword id="KW-1185">Reference proteome</keyword>
<keyword id="KW-0732">Signal</keyword>
<proteinExistence type="inferred from homology"/>
<comment type="function">
    <text evidence="1">This is a non-secretory ribonuclease. It is a pyrimidine specific nuclease with a slight preference for U. Cytotoxin and helminthotoxin. Possesses a wide variety of biological activities (By similarity).</text>
</comment>
<comment type="catalytic activity">
    <reaction evidence="2">
        <text>an [RNA] containing cytidine + H2O = an [RNA]-3'-cytidine-3'-phosphate + a 5'-hydroxy-ribonucleotide-3'-[RNA].</text>
        <dbReference type="EC" id="4.6.1.18"/>
    </reaction>
</comment>
<comment type="catalytic activity">
    <reaction evidence="2">
        <text>an [RNA] containing uridine + H2O = an [RNA]-3'-uridine-3'-phosphate + a 5'-hydroxy-ribonucleotide-3'-[RNA].</text>
        <dbReference type="EC" id="4.6.1.18"/>
    </reaction>
</comment>
<comment type="subunit">
    <text evidence="1">Interacts with and forms a tight 1:1 complex with RNH1. Dimerization of two such complexes may occur (By similarity).</text>
</comment>
<comment type="subcellular location">
    <subcellularLocation>
        <location evidence="5">Lysosome</location>
    </subcellularLocation>
    <subcellularLocation>
        <location evidence="1">Cytoplasmic granule</location>
    </subcellularLocation>
    <text evidence="1">Matrix of eosinophil's large specific granule.</text>
</comment>
<comment type="similarity">
    <text evidence="5">Belongs to the pancreatic ribonuclease family.</text>
</comment>
<comment type="caution">
    <text evidence="5">Arg-34 is present instead of the conserved Trp which is expected to be C-glycosylated by mannose.</text>
</comment>
<reference key="1">
    <citation type="journal article" date="2002" name="Proc. Natl. Acad. Sci. U.S.A.">
        <title>Complementary advantageous substitutions in the evolution of an antiviral RNase of higher primates.</title>
        <authorList>
            <person name="Zhang J."/>
            <person name="Rosenberg H.F."/>
        </authorList>
    </citation>
    <scope>NUCLEOTIDE SEQUENCE [GENOMIC DNA]</scope>
</reference>
<accession>Q8SPY2</accession>
<gene>
    <name type="primary">RNASE2</name>
    <name type="synonym">EDN</name>
    <name type="synonym">RNS2</name>
</gene>
<organism>
    <name type="scientific">Callithrix jacchus</name>
    <name type="common">White-tufted-ear marmoset</name>
    <dbReference type="NCBI Taxonomy" id="9483"/>
    <lineage>
        <taxon>Eukaryota</taxon>
        <taxon>Metazoa</taxon>
        <taxon>Chordata</taxon>
        <taxon>Craniata</taxon>
        <taxon>Vertebrata</taxon>
        <taxon>Euteleostomi</taxon>
        <taxon>Mammalia</taxon>
        <taxon>Eutheria</taxon>
        <taxon>Euarchontoglires</taxon>
        <taxon>Primates</taxon>
        <taxon>Haplorrhini</taxon>
        <taxon>Platyrrhini</taxon>
        <taxon>Cebidae</taxon>
        <taxon>Callitrichinae</taxon>
        <taxon>Callithrix</taxon>
        <taxon>Callithrix</taxon>
    </lineage>
</organism>
<name>RNAS2_CALJA</name>
<protein>
    <recommendedName>
        <fullName>Non-secretory ribonuclease</fullName>
        <ecNumber evidence="2">4.6.1.18</ecNumber>
    </recommendedName>
    <alternativeName>
        <fullName>Eosinophil-derived neurotoxin</fullName>
    </alternativeName>
    <alternativeName>
        <fullName>RNase UpI-2</fullName>
    </alternativeName>
    <alternativeName>
        <fullName>Ribonuclease 2</fullName>
        <shortName>RNase 2</shortName>
    </alternativeName>
    <alternativeName>
        <fullName>Ribonuclease US</fullName>
    </alternativeName>
</protein>
<feature type="signal peptide" evidence="1">
    <location>
        <begin position="1"/>
        <end position="27"/>
    </location>
</feature>
<feature type="chain" id="PRO_0000251795" description="Non-secretory ribonuclease">
    <location>
        <begin position="28"/>
        <end position="158"/>
    </location>
</feature>
<feature type="active site" description="Proton acceptor" evidence="1">
    <location>
        <position position="42"/>
    </location>
</feature>
<feature type="active site" description="Proton donor" evidence="1">
    <location>
        <position position="153"/>
    </location>
</feature>
<feature type="binding site" evidence="1">
    <location>
        <begin position="65"/>
        <end position="69"/>
    </location>
    <ligand>
        <name>substrate</name>
    </ligand>
</feature>
<feature type="modified residue" description="3'-nitrotyrosine" evidence="3">
    <location>
        <position position="60"/>
    </location>
</feature>
<feature type="glycosylation site" description="N-linked (GlcNAc...) asparagine" evidence="4">
    <location>
        <position position="86"/>
    </location>
</feature>
<feature type="glycosylation site" description="N-linked (GlcNAc...) asparagine" evidence="4">
    <location>
        <position position="92"/>
    </location>
</feature>
<feature type="glycosylation site" description="N-linked (GlcNAc...) asparagine" evidence="4">
    <location>
        <position position="111"/>
    </location>
</feature>